<name>RL361_PSEAE</name>
<sequence>MKVRASVKKLCRNCKIIRRDGIVRVICSAEPRHKQRQG</sequence>
<protein>
    <recommendedName>
        <fullName evidence="1">Large ribosomal subunit protein bL36A</fullName>
    </recommendedName>
    <alternativeName>
        <fullName evidence="2">50S ribosomal protein L36 1</fullName>
    </alternativeName>
</protein>
<comment type="similarity">
    <text evidence="1">Belongs to the bacterial ribosomal protein bL36 family.</text>
</comment>
<evidence type="ECO:0000255" key="1">
    <source>
        <dbReference type="HAMAP-Rule" id="MF_00251"/>
    </source>
</evidence>
<evidence type="ECO:0000305" key="2"/>
<dbReference type="EMBL" id="AE004091">
    <property type="protein sequence ID" value="AAG07630.1"/>
    <property type="molecule type" value="Genomic_DNA"/>
</dbReference>
<dbReference type="PIR" id="H83113">
    <property type="entry name" value="H83113"/>
</dbReference>
<dbReference type="RefSeq" id="NP_252932.1">
    <property type="nucleotide sequence ID" value="NC_002516.2"/>
</dbReference>
<dbReference type="RefSeq" id="WP_003093693.1">
    <property type="nucleotide sequence ID" value="NZ_QZGE01000028.1"/>
</dbReference>
<dbReference type="PDB" id="7UNR">
    <property type="method" value="EM"/>
    <property type="resolution" value="2.90 A"/>
    <property type="chains" value="8=1-38"/>
</dbReference>
<dbReference type="PDB" id="7UNU">
    <property type="method" value="EM"/>
    <property type="resolution" value="2.90 A"/>
    <property type="chains" value="8=1-38"/>
</dbReference>
<dbReference type="PDB" id="7UNV">
    <property type="method" value="EM"/>
    <property type="resolution" value="2.70 A"/>
    <property type="chains" value="8=1-38"/>
</dbReference>
<dbReference type="PDB" id="7UNW">
    <property type="method" value="EM"/>
    <property type="resolution" value="2.60 A"/>
    <property type="chains" value="8=1-38"/>
</dbReference>
<dbReference type="PDB" id="8CD1">
    <property type="method" value="EM"/>
    <property type="resolution" value="3.00 A"/>
    <property type="chains" value="6=1-38"/>
</dbReference>
<dbReference type="PDB" id="8RWG">
    <property type="method" value="EM"/>
    <property type="resolution" value="2.46 A"/>
    <property type="chains" value="9=1-38"/>
</dbReference>
<dbReference type="PDBsum" id="7UNR"/>
<dbReference type="PDBsum" id="7UNU"/>
<dbReference type="PDBsum" id="7UNV"/>
<dbReference type="PDBsum" id="7UNW"/>
<dbReference type="PDBsum" id="8CD1"/>
<dbReference type="PDBsum" id="8RWG"/>
<dbReference type="EMDB" id="EMD-16566"/>
<dbReference type="EMDB" id="EMD-19547"/>
<dbReference type="EMDB" id="EMD-26630"/>
<dbReference type="EMDB" id="EMD-26633"/>
<dbReference type="EMDB" id="EMD-26634"/>
<dbReference type="EMDB" id="EMD-26635"/>
<dbReference type="SMR" id="Q9HWF6"/>
<dbReference type="FunCoup" id="Q9HWF6">
    <property type="interactions" value="268"/>
</dbReference>
<dbReference type="STRING" id="208964.PA4242"/>
<dbReference type="PaxDb" id="208964-PA4242"/>
<dbReference type="DNASU" id="881839"/>
<dbReference type="GeneID" id="77219219"/>
<dbReference type="GeneID" id="881839"/>
<dbReference type="KEGG" id="pae:PA4242"/>
<dbReference type="PATRIC" id="fig|208964.12.peg.4443"/>
<dbReference type="PseudoCAP" id="PA4242"/>
<dbReference type="HOGENOM" id="CLU_135723_6_2_6"/>
<dbReference type="InParanoid" id="Q9HWF6"/>
<dbReference type="OrthoDB" id="9802520at2"/>
<dbReference type="PhylomeDB" id="Q9HWF6"/>
<dbReference type="BioCyc" id="PAER208964:G1FZ6-4315-MONOMER"/>
<dbReference type="PRO" id="PR:Q9HWF6"/>
<dbReference type="Proteomes" id="UP000002438">
    <property type="component" value="Chromosome"/>
</dbReference>
<dbReference type="GO" id="GO:0005737">
    <property type="term" value="C:cytoplasm"/>
    <property type="evidence" value="ECO:0007669"/>
    <property type="project" value="UniProtKB-ARBA"/>
</dbReference>
<dbReference type="GO" id="GO:1990904">
    <property type="term" value="C:ribonucleoprotein complex"/>
    <property type="evidence" value="ECO:0007669"/>
    <property type="project" value="UniProtKB-KW"/>
</dbReference>
<dbReference type="GO" id="GO:0005840">
    <property type="term" value="C:ribosome"/>
    <property type="evidence" value="ECO:0007669"/>
    <property type="project" value="UniProtKB-KW"/>
</dbReference>
<dbReference type="GO" id="GO:0003735">
    <property type="term" value="F:structural constituent of ribosome"/>
    <property type="evidence" value="ECO:0007669"/>
    <property type="project" value="InterPro"/>
</dbReference>
<dbReference type="GO" id="GO:0006412">
    <property type="term" value="P:translation"/>
    <property type="evidence" value="ECO:0007669"/>
    <property type="project" value="UniProtKB-UniRule"/>
</dbReference>
<dbReference type="HAMAP" id="MF_00251">
    <property type="entry name" value="Ribosomal_bL36"/>
    <property type="match status" value="1"/>
</dbReference>
<dbReference type="InterPro" id="IPR000473">
    <property type="entry name" value="Ribosomal_bL36"/>
</dbReference>
<dbReference type="InterPro" id="IPR035977">
    <property type="entry name" value="Ribosomal_bL36_sp"/>
</dbReference>
<dbReference type="NCBIfam" id="TIGR01022">
    <property type="entry name" value="rpmJ_bact"/>
    <property type="match status" value="1"/>
</dbReference>
<dbReference type="PANTHER" id="PTHR42888">
    <property type="entry name" value="50S RIBOSOMAL PROTEIN L36, CHLOROPLASTIC"/>
    <property type="match status" value="1"/>
</dbReference>
<dbReference type="PANTHER" id="PTHR42888:SF1">
    <property type="entry name" value="LARGE RIBOSOMAL SUBUNIT PROTEIN BL36C"/>
    <property type="match status" value="1"/>
</dbReference>
<dbReference type="Pfam" id="PF00444">
    <property type="entry name" value="Ribosomal_L36"/>
    <property type="match status" value="1"/>
</dbReference>
<dbReference type="SUPFAM" id="SSF57840">
    <property type="entry name" value="Ribosomal protein L36"/>
    <property type="match status" value="1"/>
</dbReference>
<dbReference type="PROSITE" id="PS00828">
    <property type="entry name" value="RIBOSOMAL_L36"/>
    <property type="match status" value="1"/>
</dbReference>
<organism>
    <name type="scientific">Pseudomonas aeruginosa (strain ATCC 15692 / DSM 22644 / CIP 104116 / JCM 14847 / LMG 12228 / 1C / PRS 101 / PAO1)</name>
    <dbReference type="NCBI Taxonomy" id="208964"/>
    <lineage>
        <taxon>Bacteria</taxon>
        <taxon>Pseudomonadati</taxon>
        <taxon>Pseudomonadota</taxon>
        <taxon>Gammaproteobacteria</taxon>
        <taxon>Pseudomonadales</taxon>
        <taxon>Pseudomonadaceae</taxon>
        <taxon>Pseudomonas</taxon>
    </lineage>
</organism>
<reference key="1">
    <citation type="journal article" date="2000" name="Nature">
        <title>Complete genome sequence of Pseudomonas aeruginosa PAO1, an opportunistic pathogen.</title>
        <authorList>
            <person name="Stover C.K."/>
            <person name="Pham X.-Q.T."/>
            <person name="Erwin A.L."/>
            <person name="Mizoguchi S.D."/>
            <person name="Warrener P."/>
            <person name="Hickey M.J."/>
            <person name="Brinkman F.S.L."/>
            <person name="Hufnagle W.O."/>
            <person name="Kowalik D.J."/>
            <person name="Lagrou M."/>
            <person name="Garber R.L."/>
            <person name="Goltry L."/>
            <person name="Tolentino E."/>
            <person name="Westbrock-Wadman S."/>
            <person name="Yuan Y."/>
            <person name="Brody L.L."/>
            <person name="Coulter S.N."/>
            <person name="Folger K.R."/>
            <person name="Kas A."/>
            <person name="Larbig K."/>
            <person name="Lim R.M."/>
            <person name="Smith K.A."/>
            <person name="Spencer D.H."/>
            <person name="Wong G.K.-S."/>
            <person name="Wu Z."/>
            <person name="Paulsen I.T."/>
            <person name="Reizer J."/>
            <person name="Saier M.H. Jr."/>
            <person name="Hancock R.E.W."/>
            <person name="Lory S."/>
            <person name="Olson M.V."/>
        </authorList>
    </citation>
    <scope>NUCLEOTIDE SEQUENCE [LARGE SCALE GENOMIC DNA]</scope>
    <source>
        <strain>ATCC 15692 / DSM 22644 / CIP 104116 / JCM 14847 / LMG 12228 / 1C / PRS 101 / PAO1</strain>
    </source>
</reference>
<gene>
    <name evidence="1" type="primary">rpmJ</name>
    <name type="ordered locus">PA4242</name>
</gene>
<proteinExistence type="evidence at protein level"/>
<accession>Q9HWF6</accession>
<feature type="chain" id="PRO_0000126239" description="Large ribosomal subunit protein bL36A">
    <location>
        <begin position="1"/>
        <end position="38"/>
    </location>
</feature>
<keyword id="KW-0002">3D-structure</keyword>
<keyword id="KW-1185">Reference proteome</keyword>
<keyword id="KW-0687">Ribonucleoprotein</keyword>
<keyword id="KW-0689">Ribosomal protein</keyword>